<feature type="chain" id="PRO_0000226351" description="Testin">
    <location>
        <begin position="1"/>
        <end position="421"/>
    </location>
</feature>
<feature type="domain" description="PET" evidence="3">
    <location>
        <begin position="92"/>
        <end position="199"/>
    </location>
</feature>
<feature type="domain" description="LIM zinc-binding 1" evidence="2">
    <location>
        <begin position="234"/>
        <end position="297"/>
    </location>
</feature>
<feature type="domain" description="LIM zinc-binding 2" evidence="2">
    <location>
        <begin position="299"/>
        <end position="359"/>
    </location>
</feature>
<feature type="domain" description="LIM zinc-binding 3" evidence="2">
    <location>
        <begin position="362"/>
        <end position="421"/>
    </location>
</feature>
<feature type="region of interest" description="Disordered" evidence="4">
    <location>
        <begin position="133"/>
        <end position="164"/>
    </location>
</feature>
<feature type="compositionally biased region" description="Basic and acidic residues" evidence="4">
    <location>
        <begin position="155"/>
        <end position="164"/>
    </location>
</feature>
<keyword id="KW-0965">Cell junction</keyword>
<keyword id="KW-0963">Cytoplasm</keyword>
<keyword id="KW-0440">LIM domain</keyword>
<keyword id="KW-0479">Metal-binding</keyword>
<keyword id="KW-1185">Reference proteome</keyword>
<keyword id="KW-0677">Repeat</keyword>
<keyword id="KW-0862">Zinc</keyword>
<dbReference type="EMBL" id="DP000017">
    <property type="protein sequence ID" value="ABA90382.1"/>
    <property type="molecule type" value="Genomic_DNA"/>
</dbReference>
<dbReference type="RefSeq" id="NP_001116672.1">
    <property type="nucleotide sequence ID" value="NM_001123200.1"/>
</dbReference>
<dbReference type="SMR" id="Q2QLE3"/>
<dbReference type="FunCoup" id="Q2QLE3">
    <property type="interactions" value="275"/>
</dbReference>
<dbReference type="STRING" id="9823.ENSSSCP00000051115"/>
<dbReference type="PaxDb" id="9823-ENSSSCP00000017624"/>
<dbReference type="PeptideAtlas" id="Q2QLE3"/>
<dbReference type="Ensembl" id="ENSSSCT00000041361.3">
    <property type="protein sequence ID" value="ENSSSCP00000051115.1"/>
    <property type="gene ID" value="ENSSSCG00000040344.3"/>
</dbReference>
<dbReference type="Ensembl" id="ENSSSCT00015004232.1">
    <property type="protein sequence ID" value="ENSSSCP00015001506.1"/>
    <property type="gene ID" value="ENSSSCG00015003335.1"/>
</dbReference>
<dbReference type="Ensembl" id="ENSSSCT00025099837.1">
    <property type="protein sequence ID" value="ENSSSCP00025044005.1"/>
    <property type="gene ID" value="ENSSSCG00025072605.1"/>
</dbReference>
<dbReference type="Ensembl" id="ENSSSCT00030073442.1">
    <property type="protein sequence ID" value="ENSSSCP00030033590.1"/>
    <property type="gene ID" value="ENSSSCG00030052674.1"/>
</dbReference>
<dbReference type="Ensembl" id="ENSSSCT00035046583.1">
    <property type="protein sequence ID" value="ENSSSCP00035018623.1"/>
    <property type="gene ID" value="ENSSSCG00035035158.1"/>
</dbReference>
<dbReference type="Ensembl" id="ENSSSCT00040055513.1">
    <property type="protein sequence ID" value="ENSSSCP00040023077.1"/>
    <property type="gene ID" value="ENSSSCG00040041528.1"/>
</dbReference>
<dbReference type="Ensembl" id="ENSSSCT00045001949.1">
    <property type="protein sequence ID" value="ENSSSCP00045001240.1"/>
    <property type="gene ID" value="ENSSSCG00045001254.1"/>
</dbReference>
<dbReference type="Ensembl" id="ENSSSCT00050063745.1">
    <property type="protein sequence ID" value="ENSSSCP00050027402.1"/>
    <property type="gene ID" value="ENSSSCG00050046832.1"/>
</dbReference>
<dbReference type="Ensembl" id="ENSSSCT00055037001.1">
    <property type="protein sequence ID" value="ENSSSCP00055029411.1"/>
    <property type="gene ID" value="ENSSSCG00055018908.1"/>
</dbReference>
<dbReference type="Ensembl" id="ENSSSCT00060099213.1">
    <property type="protein sequence ID" value="ENSSSCP00060043046.1"/>
    <property type="gene ID" value="ENSSSCG00060072616.1"/>
</dbReference>
<dbReference type="Ensembl" id="ENSSSCT00065000699.1">
    <property type="protein sequence ID" value="ENSSSCP00065000158.1"/>
    <property type="gene ID" value="ENSSSCG00065000607.1"/>
</dbReference>
<dbReference type="Ensembl" id="ENSSSCT00070057623.1">
    <property type="protein sequence ID" value="ENSSSCP00070048993.1"/>
    <property type="gene ID" value="ENSSSCG00070028716.1"/>
</dbReference>
<dbReference type="Ensembl" id="ENSSSCT00085001912">
    <property type="protein sequence ID" value="ENSSSCP00085001434"/>
    <property type="gene ID" value="ENSSSCG00085001300"/>
</dbReference>
<dbReference type="Ensembl" id="ENSSSCT00090001277">
    <property type="protein sequence ID" value="ENSSSCP00090000716"/>
    <property type="gene ID" value="ENSSSCG00090000820"/>
</dbReference>
<dbReference type="Ensembl" id="ENSSSCT00105012543">
    <property type="protein sequence ID" value="ENSSSCP00105009317"/>
    <property type="gene ID" value="ENSSSCG00105006143"/>
</dbReference>
<dbReference type="Ensembl" id="ENSSSCT00110069253">
    <property type="protein sequence ID" value="ENSSSCP00110048800"/>
    <property type="gene ID" value="ENSSSCG00110036401"/>
</dbReference>
<dbReference type="Ensembl" id="ENSSSCT00115022469">
    <property type="protein sequence ID" value="ENSSSCP00115021286"/>
    <property type="gene ID" value="ENSSSCG00115013035"/>
</dbReference>
<dbReference type="Ensembl" id="ENSSSCT00130009881">
    <property type="protein sequence ID" value="ENSSSCP00130006552"/>
    <property type="gene ID" value="ENSSSCG00130005299"/>
</dbReference>
<dbReference type="GeneID" id="100125376"/>
<dbReference type="KEGG" id="ssc:100125376"/>
<dbReference type="CTD" id="26136"/>
<dbReference type="VGNC" id="VGNC:93884">
    <property type="gene designation" value="TES"/>
</dbReference>
<dbReference type="eggNOG" id="KOG1704">
    <property type="taxonomic scope" value="Eukaryota"/>
</dbReference>
<dbReference type="GeneTree" id="ENSGT00940000155993"/>
<dbReference type="InParanoid" id="Q2QLE3"/>
<dbReference type="OMA" id="PHMGPHS"/>
<dbReference type="OrthoDB" id="10069167at2759"/>
<dbReference type="Proteomes" id="UP000008227">
    <property type="component" value="Chromosome 18"/>
</dbReference>
<dbReference type="Proteomes" id="UP000314985">
    <property type="component" value="Chromosome 18"/>
</dbReference>
<dbReference type="Proteomes" id="UP000694570">
    <property type="component" value="Unplaced"/>
</dbReference>
<dbReference type="Proteomes" id="UP000694571">
    <property type="component" value="Unplaced"/>
</dbReference>
<dbReference type="Proteomes" id="UP000694720">
    <property type="component" value="Unplaced"/>
</dbReference>
<dbReference type="Proteomes" id="UP000694722">
    <property type="component" value="Unplaced"/>
</dbReference>
<dbReference type="Proteomes" id="UP000694723">
    <property type="component" value="Unplaced"/>
</dbReference>
<dbReference type="Proteomes" id="UP000694724">
    <property type="component" value="Unplaced"/>
</dbReference>
<dbReference type="Proteomes" id="UP000694725">
    <property type="component" value="Unplaced"/>
</dbReference>
<dbReference type="Proteomes" id="UP000694726">
    <property type="component" value="Unplaced"/>
</dbReference>
<dbReference type="Proteomes" id="UP000694727">
    <property type="component" value="Unplaced"/>
</dbReference>
<dbReference type="Proteomes" id="UP000694728">
    <property type="component" value="Unplaced"/>
</dbReference>
<dbReference type="Bgee" id="ENSSSCG00000040344">
    <property type="expression patterns" value="Expressed in testis and 40 other cell types or tissues"/>
</dbReference>
<dbReference type="ExpressionAtlas" id="Q2QLE3">
    <property type="expression patterns" value="baseline and differential"/>
</dbReference>
<dbReference type="GO" id="GO:0005737">
    <property type="term" value="C:cytoplasm"/>
    <property type="evidence" value="ECO:0000250"/>
    <property type="project" value="UniProtKB"/>
</dbReference>
<dbReference type="GO" id="GO:0005829">
    <property type="term" value="C:cytosol"/>
    <property type="evidence" value="ECO:0007669"/>
    <property type="project" value="Ensembl"/>
</dbReference>
<dbReference type="GO" id="GO:0005925">
    <property type="term" value="C:focal adhesion"/>
    <property type="evidence" value="ECO:0007669"/>
    <property type="project" value="UniProtKB-SubCell"/>
</dbReference>
<dbReference type="GO" id="GO:0005886">
    <property type="term" value="C:plasma membrane"/>
    <property type="evidence" value="ECO:0007669"/>
    <property type="project" value="Ensembl"/>
</dbReference>
<dbReference type="GO" id="GO:0032991">
    <property type="term" value="C:protein-containing complex"/>
    <property type="evidence" value="ECO:0007669"/>
    <property type="project" value="Ensembl"/>
</dbReference>
<dbReference type="GO" id="GO:0008270">
    <property type="term" value="F:zinc ion binding"/>
    <property type="evidence" value="ECO:0000250"/>
    <property type="project" value="UniProtKB"/>
</dbReference>
<dbReference type="GO" id="GO:0008285">
    <property type="term" value="P:negative regulation of cell population proliferation"/>
    <property type="evidence" value="ECO:0000250"/>
    <property type="project" value="UniProtKB"/>
</dbReference>
<dbReference type="CDD" id="cd09413">
    <property type="entry name" value="LIM1_Testin"/>
    <property type="match status" value="1"/>
</dbReference>
<dbReference type="CDD" id="cd09416">
    <property type="entry name" value="LIM2_Testin"/>
    <property type="match status" value="1"/>
</dbReference>
<dbReference type="CDD" id="cd09419">
    <property type="entry name" value="LIM3_Testin"/>
    <property type="match status" value="1"/>
</dbReference>
<dbReference type="CDD" id="cd09829">
    <property type="entry name" value="PET_testin"/>
    <property type="match status" value="1"/>
</dbReference>
<dbReference type="FunFam" id="2.10.110.10:FF:000061">
    <property type="entry name" value="Testin"/>
    <property type="match status" value="1"/>
</dbReference>
<dbReference type="FunFam" id="2.10.110.10:FF:000065">
    <property type="entry name" value="Testin"/>
    <property type="match status" value="1"/>
</dbReference>
<dbReference type="FunFam" id="2.10.110.10:FF:000005">
    <property type="entry name" value="Testin isoform 1"/>
    <property type="match status" value="1"/>
</dbReference>
<dbReference type="Gene3D" id="2.10.110.10">
    <property type="entry name" value="Cysteine Rich Protein"/>
    <property type="match status" value="3"/>
</dbReference>
<dbReference type="InterPro" id="IPR034958">
    <property type="entry name" value="LIM1_Testin"/>
</dbReference>
<dbReference type="InterPro" id="IPR034959">
    <property type="entry name" value="LIM2_Testin"/>
</dbReference>
<dbReference type="InterPro" id="IPR034960">
    <property type="entry name" value="LIM3_Testin"/>
</dbReference>
<dbReference type="InterPro" id="IPR010442">
    <property type="entry name" value="PET_domain"/>
</dbReference>
<dbReference type="InterPro" id="IPR033724">
    <property type="entry name" value="PET_testin"/>
</dbReference>
<dbReference type="InterPro" id="IPR047120">
    <property type="entry name" value="Pk/Esn/Tes"/>
</dbReference>
<dbReference type="InterPro" id="IPR001781">
    <property type="entry name" value="Znf_LIM"/>
</dbReference>
<dbReference type="PANTHER" id="PTHR24211">
    <property type="entry name" value="LIM DOMAIN-CONTAINING PROTEIN"/>
    <property type="match status" value="1"/>
</dbReference>
<dbReference type="PANTHER" id="PTHR24211:SF1">
    <property type="entry name" value="TESTIN"/>
    <property type="match status" value="1"/>
</dbReference>
<dbReference type="Pfam" id="PF00412">
    <property type="entry name" value="LIM"/>
    <property type="match status" value="3"/>
</dbReference>
<dbReference type="Pfam" id="PF06297">
    <property type="entry name" value="PET"/>
    <property type="match status" value="1"/>
</dbReference>
<dbReference type="SMART" id="SM00132">
    <property type="entry name" value="LIM"/>
    <property type="match status" value="3"/>
</dbReference>
<dbReference type="SUPFAM" id="SSF57716">
    <property type="entry name" value="Glucocorticoid receptor-like (DNA-binding domain)"/>
    <property type="match status" value="2"/>
</dbReference>
<dbReference type="PROSITE" id="PS00478">
    <property type="entry name" value="LIM_DOMAIN_1"/>
    <property type="match status" value="2"/>
</dbReference>
<dbReference type="PROSITE" id="PS50023">
    <property type="entry name" value="LIM_DOMAIN_2"/>
    <property type="match status" value="3"/>
</dbReference>
<dbReference type="PROSITE" id="PS51303">
    <property type="entry name" value="PET"/>
    <property type="match status" value="1"/>
</dbReference>
<gene>
    <name type="primary">TES</name>
</gene>
<evidence type="ECO:0000250" key="1"/>
<evidence type="ECO:0000255" key="2">
    <source>
        <dbReference type="PROSITE-ProRule" id="PRU00125"/>
    </source>
</evidence>
<evidence type="ECO:0000255" key="3">
    <source>
        <dbReference type="PROSITE-ProRule" id="PRU00636"/>
    </source>
</evidence>
<evidence type="ECO:0000256" key="4">
    <source>
        <dbReference type="SAM" id="MobiDB-lite"/>
    </source>
</evidence>
<evidence type="ECO:0000305" key="5"/>
<proteinExistence type="inferred from homology"/>
<protein>
    <recommendedName>
        <fullName>Testin</fullName>
    </recommendedName>
</protein>
<sequence length="421" mass="47947">MDLEAKVKKMGLGHEQGFGAPCLKCKEKCEGFELHFWRKICRNCKCGQEEHDVLLSNEEDRKVGKLFEDTKYTTLIAKLKSDGIPMYKRNVMILTNPVAAKKNISINTVTYEWAPPVQNQALARQYMQMLPKEKQPVAGSEGAQYRKKQLAKQLPAHDQDPSKCHELSPKEVKEMEQFVKKYKSEALGVGDVKLPREMNAQGPNRMCIPGGDRSTTSAVGAMEDKSAEHKTTQYSCYCCKLSMKEGDPAIYAERAGYDKLWHPACFVCSTCHELLVDMIYFWKNDKLYCGRHYCDSEKPRCAGCDELIFSNEYTQAENQNWHLKHFCCFDCDNILAGEIYVMVNDKPVCKPCYVKNHAVVCQGCHNAIDPEVQRVTYNNFSWHASTECFLCSCCSKCLIGQKFMPVEGMVFCSVECKKMMS</sequence>
<organism>
    <name type="scientific">Sus scrofa</name>
    <name type="common">Pig</name>
    <dbReference type="NCBI Taxonomy" id="9823"/>
    <lineage>
        <taxon>Eukaryota</taxon>
        <taxon>Metazoa</taxon>
        <taxon>Chordata</taxon>
        <taxon>Craniata</taxon>
        <taxon>Vertebrata</taxon>
        <taxon>Euteleostomi</taxon>
        <taxon>Mammalia</taxon>
        <taxon>Eutheria</taxon>
        <taxon>Laurasiatheria</taxon>
        <taxon>Artiodactyla</taxon>
        <taxon>Suina</taxon>
        <taxon>Suidae</taxon>
        <taxon>Sus</taxon>
    </lineage>
</organism>
<reference key="1">
    <citation type="journal article" date="2003" name="Nature">
        <title>Comparative analyses of multi-species sequences from targeted genomic regions.</title>
        <authorList>
            <person name="Thomas J.W."/>
            <person name="Touchman J.W."/>
            <person name="Blakesley R.W."/>
            <person name="Bouffard G.G."/>
            <person name="Beckstrom-Sternberg S.M."/>
            <person name="Margulies E.H."/>
            <person name="Blanchette M."/>
            <person name="Siepel A.C."/>
            <person name="Thomas P.J."/>
            <person name="McDowell J.C."/>
            <person name="Maskeri B."/>
            <person name="Hansen N.F."/>
            <person name="Schwartz M.S."/>
            <person name="Weber R.J."/>
            <person name="Kent W.J."/>
            <person name="Karolchik D."/>
            <person name="Bruen T.C."/>
            <person name="Bevan R."/>
            <person name="Cutler D.J."/>
            <person name="Schwartz S."/>
            <person name="Elnitski L."/>
            <person name="Idol J.R."/>
            <person name="Prasad A.B."/>
            <person name="Lee-Lin S.-Q."/>
            <person name="Maduro V.V.B."/>
            <person name="Summers T.J."/>
            <person name="Portnoy M.E."/>
            <person name="Dietrich N.L."/>
            <person name="Akhter N."/>
            <person name="Ayele K."/>
            <person name="Benjamin B."/>
            <person name="Cariaga K."/>
            <person name="Brinkley C.P."/>
            <person name="Brooks S.Y."/>
            <person name="Granite S."/>
            <person name="Guan X."/>
            <person name="Gupta J."/>
            <person name="Haghighi P."/>
            <person name="Ho S.-L."/>
            <person name="Huang M.C."/>
            <person name="Karlins E."/>
            <person name="Laric P.L."/>
            <person name="Legaspi R."/>
            <person name="Lim M.J."/>
            <person name="Maduro Q.L."/>
            <person name="Masiello C.A."/>
            <person name="Mastrian S.D."/>
            <person name="McCloskey J.C."/>
            <person name="Pearson R."/>
            <person name="Stantripop S."/>
            <person name="Tiongson E.E."/>
            <person name="Tran J.T."/>
            <person name="Tsurgeon C."/>
            <person name="Vogt J.L."/>
            <person name="Walker M.A."/>
            <person name="Wetherby K.D."/>
            <person name="Wiggins L.S."/>
            <person name="Young A.C."/>
            <person name="Zhang L.-H."/>
            <person name="Osoegawa K."/>
            <person name="Zhu B."/>
            <person name="Zhao B."/>
            <person name="Shu C.L."/>
            <person name="De Jong P.J."/>
            <person name="Lawrence C.E."/>
            <person name="Smit A.F."/>
            <person name="Chakravarti A."/>
            <person name="Haussler D."/>
            <person name="Green P."/>
            <person name="Miller W."/>
            <person name="Green E.D."/>
        </authorList>
    </citation>
    <scope>NUCLEOTIDE SEQUENCE [LARGE SCALE GENOMIC DNA]</scope>
</reference>
<comment type="function">
    <text evidence="1">Scaffold protein that may play a role in cell adhesion, cell spreading and in the reorganization of the actin cytoskeleton. Plays a role in the regulation of cell proliferation. May act as a tumor suppressor (By similarity).</text>
</comment>
<comment type="subunit">
    <text evidence="1">Interacts via LIM domain 1 with ZYX. Interacts (via LIM domain 3) with ENAH and VASP. Interacts with ALKBH4, talin, actin, alpha-actinin, GRIP1 and PXN (By similarity). Interacts (via LIM domain 2) with ACTL7A (via N-terminus). Heterodimer with ACTL7A; the heterodimer interacts with ENAH to form a heterotrimer (By similarity).</text>
</comment>
<comment type="subcellular location">
    <subcellularLocation>
        <location evidence="1">Cytoplasm</location>
    </subcellularLocation>
    <subcellularLocation>
        <location evidence="1">Cell junction</location>
        <location evidence="1">Focal adhesion</location>
    </subcellularLocation>
    <text evidence="1">Detected along actin stress fibers.</text>
</comment>
<comment type="domain">
    <text evidence="1">The N-terminal and the C-terminal halves of the protein can associate with each other, thereby hindering interactions with ZYX.</text>
</comment>
<comment type="similarity">
    <text evidence="5">Belongs to the prickle / espinas / testin family.</text>
</comment>
<accession>Q2QLE3</accession>
<name>TES_PIG</name>